<gene>
    <name type="primary">SEN34</name>
    <name type="ordered locus">YAR008W</name>
    <name type="ORF">FUN4</name>
</gene>
<accession>P39707</accession>
<accession>D6VPM0</accession>
<evidence type="ECO:0000250" key="1"/>
<evidence type="ECO:0000269" key="2">
    <source>
    </source>
</evidence>
<evidence type="ECO:0000269" key="3">
    <source>
    </source>
</evidence>
<evidence type="ECO:0000269" key="4">
    <source>
    </source>
</evidence>
<evidence type="ECO:0000305" key="5"/>
<organism>
    <name type="scientific">Saccharomyces cerevisiae (strain ATCC 204508 / S288c)</name>
    <name type="common">Baker's yeast</name>
    <dbReference type="NCBI Taxonomy" id="559292"/>
    <lineage>
        <taxon>Eukaryota</taxon>
        <taxon>Fungi</taxon>
        <taxon>Dikarya</taxon>
        <taxon>Ascomycota</taxon>
        <taxon>Saccharomycotina</taxon>
        <taxon>Saccharomycetes</taxon>
        <taxon>Saccharomycetales</taxon>
        <taxon>Saccharomycetaceae</taxon>
        <taxon>Saccharomyces</taxon>
    </lineage>
</organism>
<reference key="1">
    <citation type="journal article" date="1994" name="Yeast">
        <title>Sequencing of chromosome I of Saccharomyces cerevisiae: analysis of the 42 kbp SPO7-CENI-CDC15 region.</title>
        <authorList>
            <person name="Clark M.W."/>
            <person name="Keng T."/>
            <person name="Storms R.K."/>
            <person name="Zhong W.-W."/>
            <person name="Fortin N."/>
            <person name="Zeng B."/>
            <person name="Delaney S."/>
            <person name="Ouellette B.F.F."/>
            <person name="Barton A.B."/>
            <person name="Kaback D.B."/>
            <person name="Bussey H."/>
        </authorList>
    </citation>
    <scope>NUCLEOTIDE SEQUENCE [GENOMIC DNA]</scope>
    <source>
        <strain>ATCC 204511 / S288c / AB972</strain>
    </source>
</reference>
<reference key="2">
    <citation type="journal article" date="1995" name="Proc. Natl. Acad. Sci. U.S.A.">
        <title>The nucleotide sequence of chromosome I from Saccharomyces cerevisiae.</title>
        <authorList>
            <person name="Bussey H."/>
            <person name="Kaback D.B."/>
            <person name="Zhong W.-W."/>
            <person name="Vo D.H."/>
            <person name="Clark M.W."/>
            <person name="Fortin N."/>
            <person name="Hall J."/>
            <person name="Ouellette B.F.F."/>
            <person name="Keng T."/>
            <person name="Barton A.B."/>
            <person name="Su Y."/>
            <person name="Davies C.J."/>
            <person name="Storms R.K."/>
        </authorList>
    </citation>
    <scope>NUCLEOTIDE SEQUENCE [LARGE SCALE GENOMIC DNA]</scope>
    <source>
        <strain>ATCC 204508 / S288c</strain>
    </source>
</reference>
<reference key="3">
    <citation type="journal article" date="2014" name="G3 (Bethesda)">
        <title>The reference genome sequence of Saccharomyces cerevisiae: Then and now.</title>
        <authorList>
            <person name="Engel S.R."/>
            <person name="Dietrich F.S."/>
            <person name="Fisk D.G."/>
            <person name="Binkley G."/>
            <person name="Balakrishnan R."/>
            <person name="Costanzo M.C."/>
            <person name="Dwight S.S."/>
            <person name="Hitz B.C."/>
            <person name="Karra K."/>
            <person name="Nash R.S."/>
            <person name="Weng S."/>
            <person name="Wong E.D."/>
            <person name="Lloyd P."/>
            <person name="Skrzypek M.S."/>
            <person name="Miyasato S.R."/>
            <person name="Simison M."/>
            <person name="Cherry J.M."/>
        </authorList>
    </citation>
    <scope>GENOME REANNOTATION</scope>
    <source>
        <strain>ATCC 204508 / S288c</strain>
    </source>
</reference>
<reference key="4">
    <citation type="journal article" date="1997" name="Cell">
        <title>The yeast tRNA splicing endonuclease: a tetrameric enzyme with two active site subunits homologous to the archaeal tRNA endonucleases.</title>
        <authorList>
            <person name="Trotta C.R."/>
            <person name="Miao F."/>
            <person name="Arn E.A."/>
            <person name="Stevens S.W."/>
            <person name="Ho C.K."/>
            <person name="Rauhut R."/>
            <person name="Abelson J.N."/>
        </authorList>
    </citation>
    <scope>CHARACTERIZATION</scope>
    <scope>PROTEIN SEQUENCE OF 206-223</scope>
    <scope>SUBUNIT</scope>
    <scope>MUTAGENESIS OF HIS-217</scope>
</reference>
<reference key="5">
    <citation type="journal article" date="2003" name="Mol. Biol. Cell">
        <title>Possibility of cytoplasmic pre-tRNA splicing: the yeast tRNA splicing endonuclease mainly localizes on the mitochondria.</title>
        <authorList>
            <person name="Yoshihisa T."/>
            <person name="Yunoki-Esaki K."/>
            <person name="Ohshima C."/>
            <person name="Tanaka N."/>
            <person name="Endo T."/>
        </authorList>
    </citation>
    <scope>SUBCELLULAR LOCATION</scope>
</reference>
<reference key="6">
    <citation type="journal article" date="2006" name="J. Proteome Res.">
        <title>Toward the complete yeast mitochondrial proteome: multidimensional separation techniques for mitochondrial proteomics.</title>
        <authorList>
            <person name="Reinders J."/>
            <person name="Zahedi R.P."/>
            <person name="Pfanner N."/>
            <person name="Meisinger C."/>
            <person name="Sickmann A."/>
        </authorList>
    </citation>
    <scope>SUBCELLULAR LOCATION [LARGE SCALE ANALYSIS]</scope>
    <scope>IDENTIFICATION BY MASS SPECTROMETRY</scope>
</reference>
<comment type="function">
    <text>Constitutes one of the two catalytic subunit of the tRNA-splicing endonuclease complex, a complex responsible for identification and cleavage of the splice sites in pre-tRNA. It cleaves pre-tRNA at the 5'- and 3'-splice sites to release the intron. The products are an intron and two tRNA half-molecules bearing 2',3'-cyclic phosphate and 5'-OH termini. There are no conserved sequences at the splice sites, but the intron is invariably located at the same site in the gene, placing the splice sites an invariant distance from the constant structural features of the tRNA body. It probably carries the active site for 3'-splice site cleavage.</text>
</comment>
<comment type="catalytic activity">
    <reaction>
        <text>pretRNA = a 3'-half-tRNA molecule with a 5'-OH end + a 5'-half-tRNA molecule with a 2',3'-cyclic phosphate end + an intron with a 2',3'-cyclic phosphate and a 5'-hydroxyl terminus.</text>
        <dbReference type="EC" id="4.6.1.16"/>
    </reaction>
</comment>
<comment type="subunit">
    <text evidence="4">Heterotetramer composed of SEN2, SEN15, SEN34 and SEN54. Interacts directly with SEN15.</text>
</comment>
<comment type="interaction">
    <interactant intactId="EBI-16825">
        <id>P39707</id>
    </interactant>
    <interactant intactId="EBI-16817">
        <id>Q04675</id>
        <label>SEN15</label>
    </interactant>
    <organismsDiffer>false</organismsDiffer>
    <experiments>3</experiments>
</comment>
<comment type="subcellular location">
    <subcellularLocation>
        <location evidence="2">Nucleus</location>
    </subcellularLocation>
    <subcellularLocation>
        <location evidence="2">Endomembrane system</location>
        <topology evidence="2">Peripheral membrane protein</topology>
    </subcellularLocation>
    <subcellularLocation>
        <location evidence="2 3">Mitochondrion outer membrane</location>
        <topology evidence="2 3">Peripheral membrane protein</topology>
        <orientation evidence="2 3">Cytoplasmic side</orientation>
    </subcellularLocation>
    <text>The tRNA splicing endonuclease complex is predominantly associated with the outer membrane of mitochondria, suggesting that tRNA splicing mainly takes place on the mitochondrial surface.</text>
</comment>
<comment type="miscellaneous">
    <text>The tRNA splicing endonuclease complex is present with 100 molecules/cell.</text>
</comment>
<comment type="similarity">
    <text evidence="5">Belongs to the tRNA-intron endonuclease family.</text>
</comment>
<dbReference type="EC" id="4.6.1.16"/>
<dbReference type="EMBL" id="L22015">
    <property type="protein sequence ID" value="AAC04961.1"/>
    <property type="molecule type" value="Genomic_DNA"/>
</dbReference>
<dbReference type="EMBL" id="BK006935">
    <property type="protein sequence ID" value="DAA06990.1"/>
    <property type="molecule type" value="Genomic_DNA"/>
</dbReference>
<dbReference type="PIR" id="S40903">
    <property type="entry name" value="S40903"/>
</dbReference>
<dbReference type="RefSeq" id="NP_009405.1">
    <property type="nucleotide sequence ID" value="NM_001178212.1"/>
</dbReference>
<dbReference type="SMR" id="P39707"/>
<dbReference type="BioGRID" id="31794">
    <property type="interactions" value="15"/>
</dbReference>
<dbReference type="ComplexPortal" id="CPX-1832">
    <property type="entry name" value="tRNA-intron endonuclease complex"/>
</dbReference>
<dbReference type="DIP" id="DIP-3794N"/>
<dbReference type="FunCoup" id="P39707">
    <property type="interactions" value="209"/>
</dbReference>
<dbReference type="IntAct" id="P39707">
    <property type="interactions" value="5"/>
</dbReference>
<dbReference type="STRING" id="4932.YAR008W"/>
<dbReference type="GlyGen" id="P39707">
    <property type="glycosylation" value="2 sites, 1 O-linked glycan (2 sites)"/>
</dbReference>
<dbReference type="iPTMnet" id="P39707"/>
<dbReference type="PaxDb" id="4932-YAR008W"/>
<dbReference type="PeptideAtlas" id="P39707"/>
<dbReference type="EnsemblFungi" id="YAR008W_mRNA">
    <property type="protein sequence ID" value="YAR008W"/>
    <property type="gene ID" value="YAR008W"/>
</dbReference>
<dbReference type="GeneID" id="851267"/>
<dbReference type="KEGG" id="sce:YAR008W"/>
<dbReference type="AGR" id="SGD:S000000066"/>
<dbReference type="SGD" id="S000000066">
    <property type="gene designation" value="SEN34"/>
</dbReference>
<dbReference type="VEuPathDB" id="FungiDB:YAR008W"/>
<dbReference type="eggNOG" id="KOG4133">
    <property type="taxonomic scope" value="Eukaryota"/>
</dbReference>
<dbReference type="GeneTree" id="ENSGT00390000003912"/>
<dbReference type="HOGENOM" id="CLU_049366_0_0_1"/>
<dbReference type="InParanoid" id="P39707"/>
<dbReference type="OMA" id="RTFSLEW"/>
<dbReference type="OrthoDB" id="48041at2759"/>
<dbReference type="BioCyc" id="MetaCyc:G3O-28870-MONOMER"/>
<dbReference type="BioCyc" id="YEAST:G3O-28870-MONOMER"/>
<dbReference type="BRENDA" id="4.6.1.16">
    <property type="organism ID" value="984"/>
</dbReference>
<dbReference type="BioGRID-ORCS" id="851267">
    <property type="hits" value="0 hits in 10 CRISPR screens"/>
</dbReference>
<dbReference type="PRO" id="PR:P39707"/>
<dbReference type="Proteomes" id="UP000002311">
    <property type="component" value="Chromosome I"/>
</dbReference>
<dbReference type="RNAct" id="P39707">
    <property type="molecule type" value="protein"/>
</dbReference>
<dbReference type="GO" id="GO:0012505">
    <property type="term" value="C:endomembrane system"/>
    <property type="evidence" value="ECO:0007669"/>
    <property type="project" value="UniProtKB-SubCell"/>
</dbReference>
<dbReference type="GO" id="GO:0005741">
    <property type="term" value="C:mitochondrial outer membrane"/>
    <property type="evidence" value="ECO:0007005"/>
    <property type="project" value="SGD"/>
</dbReference>
<dbReference type="GO" id="GO:0005739">
    <property type="term" value="C:mitochondrion"/>
    <property type="evidence" value="ECO:0007005"/>
    <property type="project" value="SGD"/>
</dbReference>
<dbReference type="GO" id="GO:0000214">
    <property type="term" value="C:tRNA-intron endonuclease complex"/>
    <property type="evidence" value="ECO:0000314"/>
    <property type="project" value="SGD"/>
</dbReference>
<dbReference type="GO" id="GO:0016829">
    <property type="term" value="F:lyase activity"/>
    <property type="evidence" value="ECO:0007669"/>
    <property type="project" value="UniProtKB-KW"/>
</dbReference>
<dbReference type="GO" id="GO:0003676">
    <property type="term" value="F:nucleic acid binding"/>
    <property type="evidence" value="ECO:0007669"/>
    <property type="project" value="InterPro"/>
</dbReference>
<dbReference type="GO" id="GO:0000213">
    <property type="term" value="F:tRNA-intron endonuclease activity"/>
    <property type="evidence" value="ECO:0000314"/>
    <property type="project" value="SGD"/>
</dbReference>
<dbReference type="GO" id="GO:0000379">
    <property type="term" value="P:tRNA-type intron splice site recognition and cleavage"/>
    <property type="evidence" value="ECO:0000314"/>
    <property type="project" value="ComplexPortal"/>
</dbReference>
<dbReference type="CDD" id="cd22363">
    <property type="entry name" value="tRNA-intron_lyase_C"/>
    <property type="match status" value="1"/>
</dbReference>
<dbReference type="FunFam" id="3.40.1350.10:FF:000008">
    <property type="entry name" value="tRNA-splicing endonuclease subunit Sen34"/>
    <property type="match status" value="1"/>
</dbReference>
<dbReference type="Gene3D" id="3.40.1350.10">
    <property type="match status" value="1"/>
</dbReference>
<dbReference type="InterPro" id="IPR011856">
    <property type="entry name" value="tRNA_endonuc-like_dom_sf"/>
</dbReference>
<dbReference type="InterPro" id="IPR036167">
    <property type="entry name" value="tRNA_intron_Endo_cat-like_sf"/>
</dbReference>
<dbReference type="InterPro" id="IPR006677">
    <property type="entry name" value="tRNA_intron_Endonuc_cat-like"/>
</dbReference>
<dbReference type="InterPro" id="IPR006676">
    <property type="entry name" value="tRNA_splic"/>
</dbReference>
<dbReference type="InterPro" id="IPR016690">
    <property type="entry name" value="tRNA_splic_SEN34"/>
</dbReference>
<dbReference type="NCBIfam" id="TIGR00324">
    <property type="entry name" value="endA"/>
    <property type="match status" value="1"/>
</dbReference>
<dbReference type="PANTHER" id="PTHR13070:SF0">
    <property type="entry name" value="TRNA-SPLICING ENDONUCLEASE SUBUNIT SEN34"/>
    <property type="match status" value="1"/>
</dbReference>
<dbReference type="PANTHER" id="PTHR13070">
    <property type="entry name" value="TRNA-SPLICING ENDONUCLEASE SUBUNIT SEN34-RELATED"/>
    <property type="match status" value="1"/>
</dbReference>
<dbReference type="Pfam" id="PF01974">
    <property type="entry name" value="tRNA_int_endo"/>
    <property type="match status" value="1"/>
</dbReference>
<dbReference type="PIRSF" id="PIRSF017250">
    <property type="entry name" value="tRNA_splic_SEN34"/>
    <property type="match status" value="1"/>
</dbReference>
<dbReference type="SUPFAM" id="SSF53032">
    <property type="entry name" value="tRNA-intron endonuclease catalytic domain-like"/>
    <property type="match status" value="1"/>
</dbReference>
<sequence>MPPLVFDIDHIKLLRKWGICGVLSGTLPTAAQQNVFLSVPLRLMLEDVLWLHLNNLADVKLIRQEGDEIMEGITLERGAKLSKIVNDRLNKSFEYQRKFKKDEHIAKLKKIGRINDKTTAEELQRLDKSSNNDQLIESSLFIDIANTSMILRDIRSDSDSLSRDDISDLLFKQYRQAGKMQTYFLYKALRDQGYVLSPGGRFGGKFIAYPGDPLRFHSHLTIQDAIDYHNEPIDLISMISGARLGTTVKKLWVIGGVAEETKETHFFSIEWAGFG</sequence>
<protein>
    <recommendedName>
        <fullName>tRNA-splicing endonuclease subunit SEN34</fullName>
        <ecNumber>4.6.1.16</ecNumber>
    </recommendedName>
    <alternativeName>
        <fullName>Splicing endonuclease of 34 kDa</fullName>
    </alternativeName>
    <alternativeName>
        <fullName>tRNA-intron endonuclease SEN34</fullName>
    </alternativeName>
</protein>
<proteinExistence type="evidence at protein level"/>
<name>SEN34_YEAST</name>
<feature type="chain" id="PRO_0000109468" description="tRNA-splicing endonuclease subunit SEN34">
    <location>
        <begin position="1"/>
        <end position="275"/>
    </location>
</feature>
<feature type="active site" evidence="1">
    <location>
        <position position="209"/>
    </location>
</feature>
<feature type="active site">
    <location>
        <position position="217"/>
    </location>
</feature>
<feature type="active site" evidence="1">
    <location>
        <position position="250"/>
    </location>
</feature>
<feature type="mutagenesis site" description="Loss of function; induces a marked accumulation of 5' exon and intron-3' exon 2/3 molecule." evidence="4">
    <original>H</original>
    <variation>A</variation>
    <location>
        <position position="217"/>
    </location>
</feature>
<keyword id="KW-0903">Direct protein sequencing</keyword>
<keyword id="KW-0456">Lyase</keyword>
<keyword id="KW-0472">Membrane</keyword>
<keyword id="KW-0496">Mitochondrion</keyword>
<keyword id="KW-1000">Mitochondrion outer membrane</keyword>
<keyword id="KW-0539">Nucleus</keyword>
<keyword id="KW-1185">Reference proteome</keyword>
<keyword id="KW-0819">tRNA processing</keyword>